<name>RNPH_HAEI8</name>
<protein>
    <recommendedName>
        <fullName evidence="1">Ribonuclease PH</fullName>
        <shortName evidence="1">RNase PH</shortName>
        <ecNumber evidence="1">2.7.7.56</ecNumber>
    </recommendedName>
    <alternativeName>
        <fullName evidence="1">tRNA nucleotidyltransferase</fullName>
    </alternativeName>
</protein>
<comment type="function">
    <text evidence="1">Phosphorolytic 3'-5' exoribonuclease that plays an important role in tRNA 3'-end maturation. Removes nucleotide residues following the 3'-CCA terminus of tRNAs; can also add nucleotides to the ends of RNA molecules by using nucleoside diphosphates as substrates, but this may not be physiologically important. Probably plays a role in initiation of 16S rRNA degradation (leading to ribosome degradation) during starvation.</text>
</comment>
<comment type="catalytic activity">
    <reaction evidence="1">
        <text>tRNA(n+1) + phosphate = tRNA(n) + a ribonucleoside 5'-diphosphate</text>
        <dbReference type="Rhea" id="RHEA:10628"/>
        <dbReference type="Rhea" id="RHEA-COMP:17343"/>
        <dbReference type="Rhea" id="RHEA-COMP:17344"/>
        <dbReference type="ChEBI" id="CHEBI:43474"/>
        <dbReference type="ChEBI" id="CHEBI:57930"/>
        <dbReference type="ChEBI" id="CHEBI:173114"/>
        <dbReference type="EC" id="2.7.7.56"/>
    </reaction>
</comment>
<comment type="subunit">
    <text evidence="1">Homohexameric ring arranged as a trimer of dimers.</text>
</comment>
<comment type="similarity">
    <text evidence="1">Belongs to the RNase PH family.</text>
</comment>
<reference key="1">
    <citation type="journal article" date="2005" name="J. Bacteriol.">
        <title>Genomic sequence of an otitis media isolate of nontypeable Haemophilus influenzae: comparative study with H. influenzae serotype d, strain KW20.</title>
        <authorList>
            <person name="Harrison A."/>
            <person name="Dyer D.W."/>
            <person name="Gillaspy A."/>
            <person name="Ray W.C."/>
            <person name="Mungur R."/>
            <person name="Carson M.B."/>
            <person name="Zhong H."/>
            <person name="Gipson J."/>
            <person name="Gipson M."/>
            <person name="Johnson L.S."/>
            <person name="Lewis L."/>
            <person name="Bakaletz L.O."/>
            <person name="Munson R.S. Jr."/>
        </authorList>
    </citation>
    <scope>NUCLEOTIDE SEQUENCE [LARGE SCALE GENOMIC DNA]</scope>
    <source>
        <strain>86-028NP</strain>
    </source>
</reference>
<organism>
    <name type="scientific">Haemophilus influenzae (strain 86-028NP)</name>
    <dbReference type="NCBI Taxonomy" id="281310"/>
    <lineage>
        <taxon>Bacteria</taxon>
        <taxon>Pseudomonadati</taxon>
        <taxon>Pseudomonadota</taxon>
        <taxon>Gammaproteobacteria</taxon>
        <taxon>Pasteurellales</taxon>
        <taxon>Pasteurellaceae</taxon>
        <taxon>Haemophilus</taxon>
    </lineage>
</organism>
<proteinExistence type="inferred from homology"/>
<gene>
    <name evidence="1" type="primary">rph</name>
    <name type="ordered locus">NTHI0381</name>
</gene>
<feature type="chain" id="PRO_1000024814" description="Ribonuclease PH">
    <location>
        <begin position="1"/>
        <end position="238"/>
    </location>
</feature>
<feature type="binding site" evidence="1">
    <location>
        <position position="86"/>
    </location>
    <ligand>
        <name>phosphate</name>
        <dbReference type="ChEBI" id="CHEBI:43474"/>
        <note>substrate</note>
    </ligand>
</feature>
<feature type="binding site" evidence="1">
    <location>
        <begin position="124"/>
        <end position="126"/>
    </location>
    <ligand>
        <name>phosphate</name>
        <dbReference type="ChEBI" id="CHEBI:43474"/>
        <note>substrate</note>
    </ligand>
</feature>
<accession>Q4QNR6</accession>
<sequence>MRPNNRENNQPRQIKITRNYTKHAEGSVLVEFGDTKVLCTATVEDAVPRFLKGQGQGWVTAEYGMLPRSTHSRMQREAAKGKQGGRTMEIQRLIARSLRAMVDLKALGERAITLDCDVIQADGGTRTASITGAAVALCDAINGLIENGTLKTNPIKGLVSAISVGIVDGQAVCDLEYVEDSAAETDMNVVMMEDGRMIEVQGTAEGEPFSHEELLTLLDLAKQGCNQIFIAQREALGL</sequence>
<keyword id="KW-0548">Nucleotidyltransferase</keyword>
<keyword id="KW-0694">RNA-binding</keyword>
<keyword id="KW-0698">rRNA processing</keyword>
<keyword id="KW-0808">Transferase</keyword>
<keyword id="KW-0819">tRNA processing</keyword>
<keyword id="KW-0820">tRNA-binding</keyword>
<dbReference type="EC" id="2.7.7.56" evidence="1"/>
<dbReference type="EMBL" id="CP000057">
    <property type="protein sequence ID" value="AAX87331.1"/>
    <property type="molecule type" value="Genomic_DNA"/>
</dbReference>
<dbReference type="RefSeq" id="WP_005632808.1">
    <property type="nucleotide sequence ID" value="NC_007146.2"/>
</dbReference>
<dbReference type="SMR" id="Q4QNR6"/>
<dbReference type="GeneID" id="93219215"/>
<dbReference type="KEGG" id="hit:NTHI0381"/>
<dbReference type="HOGENOM" id="CLU_050858_0_0_6"/>
<dbReference type="Proteomes" id="UP000002525">
    <property type="component" value="Chromosome"/>
</dbReference>
<dbReference type="GO" id="GO:0000175">
    <property type="term" value="F:3'-5'-RNA exonuclease activity"/>
    <property type="evidence" value="ECO:0007669"/>
    <property type="project" value="UniProtKB-UniRule"/>
</dbReference>
<dbReference type="GO" id="GO:0000049">
    <property type="term" value="F:tRNA binding"/>
    <property type="evidence" value="ECO:0007669"/>
    <property type="project" value="UniProtKB-UniRule"/>
</dbReference>
<dbReference type="GO" id="GO:0009022">
    <property type="term" value="F:tRNA nucleotidyltransferase activity"/>
    <property type="evidence" value="ECO:0007669"/>
    <property type="project" value="UniProtKB-UniRule"/>
</dbReference>
<dbReference type="GO" id="GO:0016075">
    <property type="term" value="P:rRNA catabolic process"/>
    <property type="evidence" value="ECO:0007669"/>
    <property type="project" value="UniProtKB-UniRule"/>
</dbReference>
<dbReference type="GO" id="GO:0006364">
    <property type="term" value="P:rRNA processing"/>
    <property type="evidence" value="ECO:0007669"/>
    <property type="project" value="UniProtKB-KW"/>
</dbReference>
<dbReference type="GO" id="GO:0008033">
    <property type="term" value="P:tRNA processing"/>
    <property type="evidence" value="ECO:0007669"/>
    <property type="project" value="UniProtKB-UniRule"/>
</dbReference>
<dbReference type="CDD" id="cd11362">
    <property type="entry name" value="RNase_PH_bact"/>
    <property type="match status" value="1"/>
</dbReference>
<dbReference type="FunFam" id="3.30.230.70:FF:000003">
    <property type="entry name" value="Ribonuclease PH"/>
    <property type="match status" value="1"/>
</dbReference>
<dbReference type="Gene3D" id="3.30.230.70">
    <property type="entry name" value="GHMP Kinase, N-terminal domain"/>
    <property type="match status" value="1"/>
</dbReference>
<dbReference type="HAMAP" id="MF_00564">
    <property type="entry name" value="RNase_PH"/>
    <property type="match status" value="1"/>
</dbReference>
<dbReference type="InterPro" id="IPR001247">
    <property type="entry name" value="ExoRNase_PH_dom1"/>
</dbReference>
<dbReference type="InterPro" id="IPR015847">
    <property type="entry name" value="ExoRNase_PH_dom2"/>
</dbReference>
<dbReference type="InterPro" id="IPR036345">
    <property type="entry name" value="ExoRNase_PH_dom2_sf"/>
</dbReference>
<dbReference type="InterPro" id="IPR027408">
    <property type="entry name" value="PNPase/RNase_PH_dom_sf"/>
</dbReference>
<dbReference type="InterPro" id="IPR020568">
    <property type="entry name" value="Ribosomal_Su5_D2-typ_SF"/>
</dbReference>
<dbReference type="InterPro" id="IPR050080">
    <property type="entry name" value="RNase_PH"/>
</dbReference>
<dbReference type="InterPro" id="IPR002381">
    <property type="entry name" value="RNase_PH_bac-type"/>
</dbReference>
<dbReference type="InterPro" id="IPR018336">
    <property type="entry name" value="RNase_PH_CS"/>
</dbReference>
<dbReference type="NCBIfam" id="TIGR01966">
    <property type="entry name" value="RNasePH"/>
    <property type="match status" value="1"/>
</dbReference>
<dbReference type="PANTHER" id="PTHR11953">
    <property type="entry name" value="EXOSOME COMPLEX COMPONENT"/>
    <property type="match status" value="1"/>
</dbReference>
<dbReference type="PANTHER" id="PTHR11953:SF0">
    <property type="entry name" value="EXOSOME COMPLEX COMPONENT RRP41"/>
    <property type="match status" value="1"/>
</dbReference>
<dbReference type="Pfam" id="PF01138">
    <property type="entry name" value="RNase_PH"/>
    <property type="match status" value="1"/>
</dbReference>
<dbReference type="Pfam" id="PF03725">
    <property type="entry name" value="RNase_PH_C"/>
    <property type="match status" value="1"/>
</dbReference>
<dbReference type="SUPFAM" id="SSF55666">
    <property type="entry name" value="Ribonuclease PH domain 2-like"/>
    <property type="match status" value="1"/>
</dbReference>
<dbReference type="SUPFAM" id="SSF54211">
    <property type="entry name" value="Ribosomal protein S5 domain 2-like"/>
    <property type="match status" value="1"/>
</dbReference>
<dbReference type="PROSITE" id="PS01277">
    <property type="entry name" value="RIBONUCLEASE_PH"/>
    <property type="match status" value="1"/>
</dbReference>
<evidence type="ECO:0000255" key="1">
    <source>
        <dbReference type="HAMAP-Rule" id="MF_00564"/>
    </source>
</evidence>